<feature type="chain" id="PRO_0000298383" description="Disulfide bond formation protein B 1">
    <location>
        <begin position="1"/>
        <end position="169"/>
    </location>
</feature>
<feature type="topological domain" description="Cytoplasmic" evidence="1">
    <location>
        <begin position="1"/>
        <end position="13"/>
    </location>
</feature>
<feature type="transmembrane region" description="Helical" evidence="1">
    <location>
        <begin position="14"/>
        <end position="30"/>
    </location>
</feature>
<feature type="topological domain" description="Periplasmic" evidence="1">
    <location>
        <begin position="31"/>
        <end position="48"/>
    </location>
</feature>
<feature type="transmembrane region" description="Helical" evidence="1">
    <location>
        <begin position="49"/>
        <end position="64"/>
    </location>
</feature>
<feature type="topological domain" description="Cytoplasmic" evidence="1">
    <location>
        <begin position="65"/>
        <end position="71"/>
    </location>
</feature>
<feature type="transmembrane region" description="Helical" evidence="1">
    <location>
        <begin position="72"/>
        <end position="89"/>
    </location>
</feature>
<feature type="topological domain" description="Periplasmic" evidence="1">
    <location>
        <begin position="90"/>
        <end position="145"/>
    </location>
</feature>
<feature type="transmembrane region" description="Helical" evidence="1">
    <location>
        <begin position="146"/>
        <end position="164"/>
    </location>
</feature>
<feature type="topological domain" description="Cytoplasmic" evidence="1">
    <location>
        <begin position="165"/>
        <end position="169"/>
    </location>
</feature>
<feature type="disulfide bond" description="Redox-active" evidence="1">
    <location>
        <begin position="40"/>
        <end position="43"/>
    </location>
</feature>
<feature type="disulfide bond" description="Redox-active" evidence="1">
    <location>
        <begin position="105"/>
        <end position="131"/>
    </location>
</feature>
<evidence type="ECO:0000255" key="1">
    <source>
        <dbReference type="HAMAP-Rule" id="MF_00286"/>
    </source>
</evidence>
<accession>Q02TM7</accession>
<reference key="1">
    <citation type="journal article" date="2006" name="Genome Biol.">
        <title>Genomic analysis reveals that Pseudomonas aeruginosa virulence is combinatorial.</title>
        <authorList>
            <person name="Lee D.G."/>
            <person name="Urbach J.M."/>
            <person name="Wu G."/>
            <person name="Liberati N.T."/>
            <person name="Feinbaum R.L."/>
            <person name="Miyata S."/>
            <person name="Diggins L.T."/>
            <person name="He J."/>
            <person name="Saucier M."/>
            <person name="Deziel E."/>
            <person name="Friedman L."/>
            <person name="Li L."/>
            <person name="Grills G."/>
            <person name="Montgomery K."/>
            <person name="Kucherlapati R."/>
            <person name="Rahme L.G."/>
            <person name="Ausubel F.M."/>
        </authorList>
    </citation>
    <scope>NUCLEOTIDE SEQUENCE [LARGE SCALE GENOMIC DNA]</scope>
    <source>
        <strain>UCBPP-PA14</strain>
    </source>
</reference>
<name>DSBB1_PSEAB</name>
<protein>
    <recommendedName>
        <fullName evidence="1">Disulfide bond formation protein B 1</fullName>
    </recommendedName>
    <alternativeName>
        <fullName evidence="1">Disulfide oxidoreductase 1</fullName>
    </alternativeName>
</protein>
<organism>
    <name type="scientific">Pseudomonas aeruginosa (strain UCBPP-PA14)</name>
    <dbReference type="NCBI Taxonomy" id="208963"/>
    <lineage>
        <taxon>Bacteria</taxon>
        <taxon>Pseudomonadati</taxon>
        <taxon>Pseudomonadota</taxon>
        <taxon>Gammaproteobacteria</taxon>
        <taxon>Pseudomonadales</taxon>
        <taxon>Pseudomonadaceae</taxon>
        <taxon>Pseudomonas</taxon>
    </lineage>
</organism>
<comment type="function">
    <text evidence="1">Required for disulfide bond formation in some periplasmic proteins. Acts by oxidizing the DsbA protein.</text>
</comment>
<comment type="subcellular location">
    <subcellularLocation>
        <location evidence="1">Cell inner membrane</location>
        <topology evidence="1">Multi-pass membrane protein</topology>
    </subcellularLocation>
</comment>
<comment type="similarity">
    <text evidence="1">Belongs to the DsbB family.</text>
</comment>
<dbReference type="EMBL" id="CP000438">
    <property type="protein sequence ID" value="ABJ15501.1"/>
    <property type="molecule type" value="Genomic_DNA"/>
</dbReference>
<dbReference type="RefSeq" id="WP_003113232.1">
    <property type="nucleotide sequence ID" value="NZ_CP034244.1"/>
</dbReference>
<dbReference type="SMR" id="Q02TM7"/>
<dbReference type="KEGG" id="pau:PA14_07000"/>
<dbReference type="PseudoCAP" id="PA14_07000"/>
<dbReference type="HOGENOM" id="CLU_098660_1_1_6"/>
<dbReference type="BioCyc" id="PAER208963:G1G74-579-MONOMER"/>
<dbReference type="Proteomes" id="UP000000653">
    <property type="component" value="Chromosome"/>
</dbReference>
<dbReference type="GO" id="GO:0005886">
    <property type="term" value="C:plasma membrane"/>
    <property type="evidence" value="ECO:0007669"/>
    <property type="project" value="UniProtKB-SubCell"/>
</dbReference>
<dbReference type="GO" id="GO:0009055">
    <property type="term" value="F:electron transfer activity"/>
    <property type="evidence" value="ECO:0007669"/>
    <property type="project" value="UniProtKB-UniRule"/>
</dbReference>
<dbReference type="GO" id="GO:0015035">
    <property type="term" value="F:protein-disulfide reductase activity"/>
    <property type="evidence" value="ECO:0007669"/>
    <property type="project" value="UniProtKB-UniRule"/>
</dbReference>
<dbReference type="GO" id="GO:0006457">
    <property type="term" value="P:protein folding"/>
    <property type="evidence" value="ECO:0007669"/>
    <property type="project" value="InterPro"/>
</dbReference>
<dbReference type="Gene3D" id="1.20.1550.10">
    <property type="entry name" value="DsbB-like"/>
    <property type="match status" value="1"/>
</dbReference>
<dbReference type="HAMAP" id="MF_00286">
    <property type="entry name" value="DsbB"/>
    <property type="match status" value="1"/>
</dbReference>
<dbReference type="InterPro" id="IPR003752">
    <property type="entry name" value="DiS_bond_form_DsbB/BdbC"/>
</dbReference>
<dbReference type="InterPro" id="IPR022920">
    <property type="entry name" value="Disulphide_bond_form_DsbB"/>
</dbReference>
<dbReference type="InterPro" id="IPR050183">
    <property type="entry name" value="DsbB"/>
</dbReference>
<dbReference type="InterPro" id="IPR023380">
    <property type="entry name" value="DsbB-like_sf"/>
</dbReference>
<dbReference type="PANTHER" id="PTHR36570">
    <property type="entry name" value="DISULFIDE BOND FORMATION PROTEIN B"/>
    <property type="match status" value="1"/>
</dbReference>
<dbReference type="PANTHER" id="PTHR36570:SF2">
    <property type="entry name" value="DISULFIDE BOND FORMATION PROTEIN B"/>
    <property type="match status" value="1"/>
</dbReference>
<dbReference type="Pfam" id="PF02600">
    <property type="entry name" value="DsbB"/>
    <property type="match status" value="1"/>
</dbReference>
<dbReference type="SUPFAM" id="SSF158442">
    <property type="entry name" value="DsbB-like"/>
    <property type="match status" value="1"/>
</dbReference>
<keyword id="KW-0997">Cell inner membrane</keyword>
<keyword id="KW-1003">Cell membrane</keyword>
<keyword id="KW-0143">Chaperone</keyword>
<keyword id="KW-1015">Disulfide bond</keyword>
<keyword id="KW-0249">Electron transport</keyword>
<keyword id="KW-0472">Membrane</keyword>
<keyword id="KW-0560">Oxidoreductase</keyword>
<keyword id="KW-0676">Redox-active center</keyword>
<keyword id="KW-0812">Transmembrane</keyword>
<keyword id="KW-1133">Transmembrane helix</keyword>
<keyword id="KW-0813">Transport</keyword>
<sequence length="169" mass="18132">MSALLKPLDNRLFWPAVAIGGLLILAFVLYLQHVRGFAPCSLCIFIRLDVLGLVLAGIVGSLAPRSRIAGGIAALGMLAASLGGIYHAWSLVAEEKLAAQGMGSCKMFMGFPEWIPLDTWLPQVFQPEGLCGEVVWTLLGQSMAVWSLALFVFCLLVLAAKLAFGRRTA</sequence>
<proteinExistence type="inferred from homology"/>
<gene>
    <name evidence="1" type="primary">dsbB1</name>
    <name type="ordered locus">PA14_07000</name>
</gene>